<evidence type="ECO:0000255" key="1">
    <source>
        <dbReference type="HAMAP-Rule" id="MF_03141"/>
    </source>
</evidence>
<keyword id="KW-0131">Cell cycle</keyword>
<keyword id="KW-0132">Cell division</keyword>
<keyword id="KW-0175">Coiled coil</keyword>
<keyword id="KW-0963">Cytoplasm</keyword>
<keyword id="KW-0206">Cytoskeleton</keyword>
<keyword id="KW-0493">Microtubule</keyword>
<keyword id="KW-0498">Mitosis</keyword>
<keyword id="KW-1185">Reference proteome</keyword>
<keyword id="KW-0677">Repeat</keyword>
<keyword id="KW-0813">Transport</keyword>
<keyword id="KW-0853">WD repeat</keyword>
<sequence length="409" mass="46122">MVLSQRQREELNQAIADYLGTNGYADSLEAFRKEADLSTEAEKKFGGLLEKKWTSVIRLQKKVMELEAKLTEAEKEVIEGAPTKNKRTPGEWIPRPPEKYSLTGHRASITRVIFHPIFGLMVSASEDATIKIWDFETGEYERSLKGHTDSVQDVAFDAQGKLLVSCSADLSIKLWDFQQSYACVKTMHGHDHNVSSVAFVPAGDYVLSASRDRTIKMWEVATGYCVKTYTGHREWVRMVRVHIEGSLFATCSNDHTIRVWLTNSKDCKVELRDHEHTVECIAWAPEAAASAINEAAGADNKKGHHQGPFLASGSRDKTIRIWDVSVGLCLLTLNGHDNWVRGLAFHPGGKYLVSASDDKTIRVWDLRNKRCMKTLYAHQHFCTSIDFHKAHPYVISGSVDQTVKVWECR</sequence>
<organism>
    <name type="scientific">Drosophila willistoni</name>
    <name type="common">Fruit fly</name>
    <dbReference type="NCBI Taxonomy" id="7260"/>
    <lineage>
        <taxon>Eukaryota</taxon>
        <taxon>Metazoa</taxon>
        <taxon>Ecdysozoa</taxon>
        <taxon>Arthropoda</taxon>
        <taxon>Hexapoda</taxon>
        <taxon>Insecta</taxon>
        <taxon>Pterygota</taxon>
        <taxon>Neoptera</taxon>
        <taxon>Endopterygota</taxon>
        <taxon>Diptera</taxon>
        <taxon>Brachycera</taxon>
        <taxon>Muscomorpha</taxon>
        <taxon>Ephydroidea</taxon>
        <taxon>Drosophilidae</taxon>
        <taxon>Drosophila</taxon>
        <taxon>Sophophora</taxon>
    </lineage>
</organism>
<name>LIS1_DROWI</name>
<feature type="chain" id="PRO_0000405049" description="Lissencephaly-1 homolog">
    <location>
        <begin position="1"/>
        <end position="409"/>
    </location>
</feature>
<feature type="domain" description="LisH" evidence="1">
    <location>
        <begin position="7"/>
        <end position="39"/>
    </location>
</feature>
<feature type="repeat" description="WD 1">
    <location>
        <begin position="104"/>
        <end position="145"/>
    </location>
</feature>
<feature type="repeat" description="WD 2">
    <location>
        <begin position="146"/>
        <end position="185"/>
    </location>
</feature>
<feature type="repeat" description="WD 3">
    <location>
        <begin position="189"/>
        <end position="228"/>
    </location>
</feature>
<feature type="repeat" description="WD 4">
    <location>
        <begin position="231"/>
        <end position="270"/>
    </location>
</feature>
<feature type="repeat" description="WD 5">
    <location>
        <begin position="273"/>
        <end position="332"/>
    </location>
</feature>
<feature type="repeat" description="WD 6">
    <location>
        <begin position="335"/>
        <end position="374"/>
    </location>
</feature>
<feature type="repeat" description="WD 7">
    <location>
        <begin position="377"/>
        <end position="409"/>
    </location>
</feature>
<feature type="coiled-coil region" evidence="1">
    <location>
        <begin position="54"/>
        <end position="81"/>
    </location>
</feature>
<proteinExistence type="inferred from homology"/>
<protein>
    <recommendedName>
        <fullName evidence="1">Lissencephaly-1 homolog</fullName>
    </recommendedName>
</protein>
<gene>
    <name evidence="1" type="primary">Lis-1</name>
    <name type="ORF">GK22131</name>
</gene>
<comment type="function">
    <text evidence="1">Positively regulates the activity of the minus-end directed microtubule motor protein dynein. May enhance dynein-mediated microtubule sliding by targeting dynein to the microtubule plus end. Required for several dynein- and microtubule-dependent processes.</text>
</comment>
<comment type="subcellular location">
    <subcellularLocation>
        <location evidence="1">Cytoplasm</location>
        <location evidence="1">Cytoskeleton</location>
    </subcellularLocation>
    <subcellularLocation>
        <location evidence="1">Cytoplasm</location>
        <location evidence="1">Cytoskeleton</location>
        <location evidence="1">Microtubule organizing center</location>
        <location evidence="1">Centrosome</location>
    </subcellularLocation>
    <text evidence="1">Localizes to the plus end of microtubules and to the centrosome.</text>
</comment>
<comment type="domain">
    <text evidence="1">Dimerization mediated by the LisH domain may be required to activate dynein.</text>
</comment>
<comment type="similarity">
    <text evidence="1">Belongs to the WD repeat LIS1/nudF family.</text>
</comment>
<accession>B4MY65</accession>
<dbReference type="EMBL" id="CH963894">
    <property type="protein sequence ID" value="EDW77054.1"/>
    <property type="molecule type" value="Genomic_DNA"/>
</dbReference>
<dbReference type="SMR" id="B4MY65"/>
<dbReference type="STRING" id="7260.B4MY65"/>
<dbReference type="EnsemblMetazoa" id="FBtr0252782">
    <property type="protein sequence ID" value="FBpp0251274"/>
    <property type="gene ID" value="FBgn0224116"/>
</dbReference>
<dbReference type="EnsemblMetazoa" id="XM_002066032.4">
    <property type="protein sequence ID" value="XP_002066068.2"/>
    <property type="gene ID" value="LOC6643350"/>
</dbReference>
<dbReference type="GeneID" id="6643350"/>
<dbReference type="KEGG" id="dwi:6643350"/>
<dbReference type="CTD" id="36791"/>
<dbReference type="eggNOG" id="KOG0295">
    <property type="taxonomic scope" value="Eukaryota"/>
</dbReference>
<dbReference type="HOGENOM" id="CLU_000288_57_15_1"/>
<dbReference type="OMA" id="WHVATKE"/>
<dbReference type="OrthoDB" id="674604at2759"/>
<dbReference type="PhylomeDB" id="B4MY65"/>
<dbReference type="Proteomes" id="UP000007798">
    <property type="component" value="Unassembled WGS sequence"/>
</dbReference>
<dbReference type="GO" id="GO:0005813">
    <property type="term" value="C:centrosome"/>
    <property type="evidence" value="ECO:0007669"/>
    <property type="project" value="UniProtKB-SubCell"/>
</dbReference>
<dbReference type="GO" id="GO:0005737">
    <property type="term" value="C:cytoplasm"/>
    <property type="evidence" value="ECO:0007669"/>
    <property type="project" value="UniProtKB-UniRule"/>
</dbReference>
<dbReference type="GO" id="GO:0005874">
    <property type="term" value="C:microtubule"/>
    <property type="evidence" value="ECO:0007669"/>
    <property type="project" value="UniProtKB-KW"/>
</dbReference>
<dbReference type="GO" id="GO:0005875">
    <property type="term" value="C:microtubule associated complex"/>
    <property type="evidence" value="ECO:0007669"/>
    <property type="project" value="UniProtKB-UniRule"/>
</dbReference>
<dbReference type="GO" id="GO:0070840">
    <property type="term" value="F:dynein complex binding"/>
    <property type="evidence" value="ECO:0007669"/>
    <property type="project" value="UniProtKB-UniRule"/>
</dbReference>
<dbReference type="GO" id="GO:0051301">
    <property type="term" value="P:cell division"/>
    <property type="evidence" value="ECO:0007669"/>
    <property type="project" value="UniProtKB-KW"/>
</dbReference>
<dbReference type="GO" id="GO:0000132">
    <property type="term" value="P:establishment of mitotic spindle orientation"/>
    <property type="evidence" value="ECO:0007669"/>
    <property type="project" value="UniProtKB-UniRule"/>
</dbReference>
<dbReference type="GO" id="GO:0051012">
    <property type="term" value="P:microtubule sliding"/>
    <property type="evidence" value="ECO:0007669"/>
    <property type="project" value="UniProtKB-UniRule"/>
</dbReference>
<dbReference type="CDD" id="cd00200">
    <property type="entry name" value="WD40"/>
    <property type="match status" value="1"/>
</dbReference>
<dbReference type="FunFam" id="2.130.10.10:FF:000038">
    <property type="entry name" value="Lissencephaly-1 homolog B"/>
    <property type="match status" value="1"/>
</dbReference>
<dbReference type="FunFam" id="1.20.960.30:FF:000002">
    <property type="entry name" value="Platelet-activating factor acetylhydrolase ib"/>
    <property type="match status" value="1"/>
</dbReference>
<dbReference type="Gene3D" id="1.20.960.30">
    <property type="match status" value="1"/>
</dbReference>
<dbReference type="Gene3D" id="2.130.10.10">
    <property type="entry name" value="YVTN repeat-like/Quinoprotein amine dehydrogenase"/>
    <property type="match status" value="1"/>
</dbReference>
<dbReference type="HAMAP" id="MF_03141">
    <property type="entry name" value="lis1"/>
    <property type="match status" value="1"/>
</dbReference>
<dbReference type="InterPro" id="IPR017252">
    <property type="entry name" value="Dynein_regulator_LIS1"/>
</dbReference>
<dbReference type="InterPro" id="IPR020472">
    <property type="entry name" value="G-protein_beta_WD-40_rep"/>
</dbReference>
<dbReference type="InterPro" id="IPR037190">
    <property type="entry name" value="LIS1_N"/>
</dbReference>
<dbReference type="InterPro" id="IPR006594">
    <property type="entry name" value="LisH"/>
</dbReference>
<dbReference type="InterPro" id="IPR056795">
    <property type="entry name" value="PAC1-like_LisH-like_dom"/>
</dbReference>
<dbReference type="InterPro" id="IPR015943">
    <property type="entry name" value="WD40/YVTN_repeat-like_dom_sf"/>
</dbReference>
<dbReference type="InterPro" id="IPR019775">
    <property type="entry name" value="WD40_repeat_CS"/>
</dbReference>
<dbReference type="InterPro" id="IPR036322">
    <property type="entry name" value="WD40_repeat_dom_sf"/>
</dbReference>
<dbReference type="InterPro" id="IPR001680">
    <property type="entry name" value="WD40_rpt"/>
</dbReference>
<dbReference type="InterPro" id="IPR050349">
    <property type="entry name" value="WD_LIS1/nudF_dynein_reg"/>
</dbReference>
<dbReference type="PANTHER" id="PTHR44129">
    <property type="entry name" value="WD REPEAT-CONTAINING PROTEIN POP1"/>
    <property type="match status" value="1"/>
</dbReference>
<dbReference type="Pfam" id="PF24951">
    <property type="entry name" value="LisH_PAC1"/>
    <property type="match status" value="1"/>
</dbReference>
<dbReference type="Pfam" id="PF00400">
    <property type="entry name" value="WD40"/>
    <property type="match status" value="7"/>
</dbReference>
<dbReference type="PIRSF" id="PIRSF037647">
    <property type="entry name" value="Dynein_regulator_Lis1"/>
    <property type="match status" value="1"/>
</dbReference>
<dbReference type="PRINTS" id="PR00320">
    <property type="entry name" value="GPROTEINBRPT"/>
</dbReference>
<dbReference type="SMART" id="SM00667">
    <property type="entry name" value="LisH"/>
    <property type="match status" value="1"/>
</dbReference>
<dbReference type="SMART" id="SM00320">
    <property type="entry name" value="WD40"/>
    <property type="match status" value="7"/>
</dbReference>
<dbReference type="SUPFAM" id="SSF109925">
    <property type="entry name" value="Lissencephaly-1 protein (Lis-1, PAF-AH alpha) N-terminal domain"/>
    <property type="match status" value="1"/>
</dbReference>
<dbReference type="SUPFAM" id="SSF50978">
    <property type="entry name" value="WD40 repeat-like"/>
    <property type="match status" value="1"/>
</dbReference>
<dbReference type="PROSITE" id="PS50896">
    <property type="entry name" value="LISH"/>
    <property type="match status" value="1"/>
</dbReference>
<dbReference type="PROSITE" id="PS00678">
    <property type="entry name" value="WD_REPEATS_1"/>
    <property type="match status" value="6"/>
</dbReference>
<dbReference type="PROSITE" id="PS50082">
    <property type="entry name" value="WD_REPEATS_2"/>
    <property type="match status" value="7"/>
</dbReference>
<dbReference type="PROSITE" id="PS50294">
    <property type="entry name" value="WD_REPEATS_REGION"/>
    <property type="match status" value="1"/>
</dbReference>
<reference key="1">
    <citation type="journal article" date="2007" name="Nature">
        <title>Evolution of genes and genomes on the Drosophila phylogeny.</title>
        <authorList>
            <consortium name="Drosophila 12 genomes consortium"/>
        </authorList>
    </citation>
    <scope>NUCLEOTIDE SEQUENCE [LARGE SCALE GENOMIC DNA]</scope>
    <source>
        <strain>Tucson 14030-0811.24</strain>
    </source>
</reference>